<dbReference type="EMBL" id="CP000243">
    <property type="protein sequence ID" value="ABE05526.1"/>
    <property type="molecule type" value="Genomic_DNA"/>
</dbReference>
<dbReference type="RefSeq" id="WP_000516135.1">
    <property type="nucleotide sequence ID" value="NZ_CP064825.1"/>
</dbReference>
<dbReference type="SMR" id="Q1RGI8"/>
<dbReference type="GeneID" id="93777429"/>
<dbReference type="KEGG" id="eci:UTI89_C0016"/>
<dbReference type="HOGENOM" id="CLU_005965_2_1_6"/>
<dbReference type="Proteomes" id="UP000001952">
    <property type="component" value="Chromosome"/>
</dbReference>
<dbReference type="GO" id="GO:0005524">
    <property type="term" value="F:ATP binding"/>
    <property type="evidence" value="ECO:0007669"/>
    <property type="project" value="UniProtKB-UniRule"/>
</dbReference>
<dbReference type="GO" id="GO:0140662">
    <property type="term" value="F:ATP-dependent protein folding chaperone"/>
    <property type="evidence" value="ECO:0007669"/>
    <property type="project" value="InterPro"/>
</dbReference>
<dbReference type="GO" id="GO:0051082">
    <property type="term" value="F:unfolded protein binding"/>
    <property type="evidence" value="ECO:0007669"/>
    <property type="project" value="InterPro"/>
</dbReference>
<dbReference type="CDD" id="cd10234">
    <property type="entry name" value="ASKHA_NBD_HSP70_DnaK-like"/>
    <property type="match status" value="1"/>
</dbReference>
<dbReference type="FunFam" id="2.60.34.10:FF:000014">
    <property type="entry name" value="Chaperone protein DnaK HSP70"/>
    <property type="match status" value="1"/>
</dbReference>
<dbReference type="FunFam" id="1.20.1270.10:FF:000001">
    <property type="entry name" value="Molecular chaperone DnaK"/>
    <property type="match status" value="1"/>
</dbReference>
<dbReference type="FunFam" id="3.30.420.40:FF:000004">
    <property type="entry name" value="Molecular chaperone DnaK"/>
    <property type="match status" value="1"/>
</dbReference>
<dbReference type="FunFam" id="3.90.640.10:FF:000003">
    <property type="entry name" value="Molecular chaperone DnaK"/>
    <property type="match status" value="1"/>
</dbReference>
<dbReference type="Gene3D" id="1.20.1270.10">
    <property type="match status" value="1"/>
</dbReference>
<dbReference type="Gene3D" id="3.30.420.40">
    <property type="match status" value="2"/>
</dbReference>
<dbReference type="Gene3D" id="3.90.640.10">
    <property type="entry name" value="Actin, Chain A, domain 4"/>
    <property type="match status" value="1"/>
</dbReference>
<dbReference type="Gene3D" id="2.60.34.10">
    <property type="entry name" value="Substrate Binding Domain Of DNAk, Chain A, domain 1"/>
    <property type="match status" value="1"/>
</dbReference>
<dbReference type="HAMAP" id="MF_00332">
    <property type="entry name" value="DnaK"/>
    <property type="match status" value="1"/>
</dbReference>
<dbReference type="InterPro" id="IPR043129">
    <property type="entry name" value="ATPase_NBD"/>
</dbReference>
<dbReference type="InterPro" id="IPR012725">
    <property type="entry name" value="Chaperone_DnaK"/>
</dbReference>
<dbReference type="InterPro" id="IPR018181">
    <property type="entry name" value="Heat_shock_70_CS"/>
</dbReference>
<dbReference type="InterPro" id="IPR029048">
    <property type="entry name" value="HSP70_C_sf"/>
</dbReference>
<dbReference type="InterPro" id="IPR029047">
    <property type="entry name" value="HSP70_peptide-bd_sf"/>
</dbReference>
<dbReference type="InterPro" id="IPR013126">
    <property type="entry name" value="Hsp_70_fam"/>
</dbReference>
<dbReference type="NCBIfam" id="NF001413">
    <property type="entry name" value="PRK00290.1"/>
    <property type="match status" value="1"/>
</dbReference>
<dbReference type="NCBIfam" id="NF003520">
    <property type="entry name" value="PRK05183.1"/>
    <property type="match status" value="1"/>
</dbReference>
<dbReference type="NCBIfam" id="TIGR02350">
    <property type="entry name" value="prok_dnaK"/>
    <property type="match status" value="1"/>
</dbReference>
<dbReference type="PANTHER" id="PTHR19375">
    <property type="entry name" value="HEAT SHOCK PROTEIN 70KDA"/>
    <property type="match status" value="1"/>
</dbReference>
<dbReference type="Pfam" id="PF00012">
    <property type="entry name" value="HSP70"/>
    <property type="match status" value="1"/>
</dbReference>
<dbReference type="PRINTS" id="PR00301">
    <property type="entry name" value="HEATSHOCK70"/>
</dbReference>
<dbReference type="SUPFAM" id="SSF53067">
    <property type="entry name" value="Actin-like ATPase domain"/>
    <property type="match status" value="2"/>
</dbReference>
<dbReference type="SUPFAM" id="SSF100934">
    <property type="entry name" value="Heat shock protein 70kD (HSP70), C-terminal subdomain"/>
    <property type="match status" value="1"/>
</dbReference>
<dbReference type="SUPFAM" id="SSF100920">
    <property type="entry name" value="Heat shock protein 70kD (HSP70), peptide-binding domain"/>
    <property type="match status" value="1"/>
</dbReference>
<dbReference type="PROSITE" id="PS00297">
    <property type="entry name" value="HSP70_1"/>
    <property type="match status" value="1"/>
</dbReference>
<dbReference type="PROSITE" id="PS00329">
    <property type="entry name" value="HSP70_2"/>
    <property type="match status" value="1"/>
</dbReference>
<dbReference type="PROSITE" id="PS01036">
    <property type="entry name" value="HSP70_3"/>
    <property type="match status" value="1"/>
</dbReference>
<accession>Q1RGI8</accession>
<gene>
    <name evidence="1" type="primary">dnaK</name>
    <name type="ordered locus">UTI89_C0016</name>
</gene>
<name>DNAK_ECOUT</name>
<evidence type="ECO:0000255" key="1">
    <source>
        <dbReference type="HAMAP-Rule" id="MF_00332"/>
    </source>
</evidence>
<evidence type="ECO:0000256" key="2">
    <source>
        <dbReference type="SAM" id="MobiDB-lite"/>
    </source>
</evidence>
<feature type="chain" id="PRO_1000059556" description="Chaperone protein DnaK">
    <location>
        <begin position="1"/>
        <end position="638"/>
    </location>
</feature>
<feature type="region of interest" description="Disordered" evidence="2">
    <location>
        <begin position="602"/>
        <end position="638"/>
    </location>
</feature>
<feature type="compositionally biased region" description="Low complexity" evidence="2">
    <location>
        <begin position="602"/>
        <end position="620"/>
    </location>
</feature>
<feature type="modified residue" description="N6-acetyllysine" evidence="1">
    <location>
        <position position="109"/>
    </location>
</feature>
<feature type="modified residue" description="Phosphothreonine; by autocatalysis" evidence="1">
    <location>
        <position position="199"/>
    </location>
</feature>
<feature type="modified residue" description="N6-acetyllysine" evidence="1">
    <location>
        <position position="245"/>
    </location>
</feature>
<feature type="modified residue" description="N6-acetyllysine" evidence="1">
    <location>
        <position position="304"/>
    </location>
</feature>
<feature type="modified residue" description="N6-acetyllysine" evidence="1">
    <location>
        <position position="421"/>
    </location>
</feature>
<feature type="modified residue" description="N6-acetyllysine" evidence="1">
    <location>
        <position position="556"/>
    </location>
</feature>
<organism>
    <name type="scientific">Escherichia coli (strain UTI89 / UPEC)</name>
    <dbReference type="NCBI Taxonomy" id="364106"/>
    <lineage>
        <taxon>Bacteria</taxon>
        <taxon>Pseudomonadati</taxon>
        <taxon>Pseudomonadota</taxon>
        <taxon>Gammaproteobacteria</taxon>
        <taxon>Enterobacterales</taxon>
        <taxon>Enterobacteriaceae</taxon>
        <taxon>Escherichia</taxon>
    </lineage>
</organism>
<comment type="function">
    <text evidence="1">Acts as a chaperone.</text>
</comment>
<comment type="induction">
    <text evidence="1">By stress conditions e.g. heat shock.</text>
</comment>
<comment type="similarity">
    <text evidence="1">Belongs to the heat shock protein 70 family.</text>
</comment>
<reference key="1">
    <citation type="journal article" date="2006" name="Proc. Natl. Acad. Sci. U.S.A.">
        <title>Identification of genes subject to positive selection in uropathogenic strains of Escherichia coli: a comparative genomics approach.</title>
        <authorList>
            <person name="Chen S.L."/>
            <person name="Hung C.-S."/>
            <person name="Xu J."/>
            <person name="Reigstad C.S."/>
            <person name="Magrini V."/>
            <person name="Sabo A."/>
            <person name="Blasiar D."/>
            <person name="Bieri T."/>
            <person name="Meyer R.R."/>
            <person name="Ozersky P."/>
            <person name="Armstrong J.R."/>
            <person name="Fulton R.S."/>
            <person name="Latreille J.P."/>
            <person name="Spieth J."/>
            <person name="Hooton T.M."/>
            <person name="Mardis E.R."/>
            <person name="Hultgren S.J."/>
            <person name="Gordon J.I."/>
        </authorList>
    </citation>
    <scope>NUCLEOTIDE SEQUENCE [LARGE SCALE GENOMIC DNA]</scope>
    <source>
        <strain>UTI89 / UPEC</strain>
    </source>
</reference>
<sequence length="638" mass="69115">MGKIIGIDLGTTNSCVAIMDGTTPRVLENAEGDRTTPSIIAYTQDGETLVGQPAKRQAVTNPQNTLFAIKRLIGRRFQDEEVQRDVSIMPFKIIAADNGDAWVEVKGQKMAPPQISAEVLKKMKKTAEDYLGEPVTEAVITVPAYFNDAQRQATKDAGRIAGLEVKRIINEPTAAALAYGLDKGTGNRTIAVYDLGGGTFDISIIEIDEVDGEKTFEVLATNGDTHLGGEDFDSRLINYLVEEFKKDQGIDLRNDPLAMQRLKEAAEKAKIELSSAQQTDVNLPYITADATGPKHMNIKVTRAKLESLVEDLVNRSIEPLKVALQDAGLSVSDIDDVILVGGQTRMPMVQKKVAEFFGKEPRKDVNPDEAVAIGAAVQGGVLTGDVKDVLLLDVTPLSLGIETMGGVMTTLIAKNTTIPTKHSQVFSTAEDNQSAVTIHVLQGERKRAADNKSLGQFNLDGINPAPRGMPQIEVTFDIDADGILHVSAKDKNSGKEQKITIKASSGLNEDEIQKMVRDAEANAEADRKFEELVQTRNQGDHLLHSTRKQVEEAGDKLPADDKTAIESALTALETALKGEDKAAIEAKMQELAQVSQKLMEIAQQQHAQQQTAGADASANNAKDDDVVDAEFEEVKDKK</sequence>
<protein>
    <recommendedName>
        <fullName evidence="1">Chaperone protein DnaK</fullName>
    </recommendedName>
    <alternativeName>
        <fullName evidence="1">HSP70</fullName>
    </alternativeName>
    <alternativeName>
        <fullName evidence="1">Heat shock 70 kDa protein</fullName>
    </alternativeName>
    <alternativeName>
        <fullName evidence="1">Heat shock protein 70</fullName>
    </alternativeName>
</protein>
<keyword id="KW-0007">Acetylation</keyword>
<keyword id="KW-0067">ATP-binding</keyword>
<keyword id="KW-0143">Chaperone</keyword>
<keyword id="KW-0547">Nucleotide-binding</keyword>
<keyword id="KW-0597">Phosphoprotein</keyword>
<keyword id="KW-0346">Stress response</keyword>
<proteinExistence type="inferred from homology"/>